<keyword id="KW-1015">Disulfide bond</keyword>
<keyword id="KW-0372">Hormone</keyword>
<keyword id="KW-1185">Reference proteome</keyword>
<keyword id="KW-0964">Secreted</keyword>
<keyword id="KW-0732">Signal</keyword>
<reference key="1">
    <citation type="journal article" date="1999" name="Gen. Comp. Endocrinol.">
        <title>Cloning, expression, and tissue localisation of prolactin in adult sea bream (Sparus aurata).</title>
        <authorList>
            <person name="Santos C.R.A."/>
            <person name="Brinca L."/>
            <person name="Ingleton P.M."/>
            <person name="Power D.M."/>
        </authorList>
    </citation>
    <scope>NUCLEOTIDE SEQUENCE [MRNA]</scope>
    <source>
        <tissue>Pituitary</tissue>
    </source>
</reference>
<comment type="subcellular location">
    <subcellularLocation>
        <location>Secreted</location>
    </subcellularLocation>
</comment>
<comment type="similarity">
    <text evidence="3">Belongs to the somatotropin/prolactin family.</text>
</comment>
<gene>
    <name type="primary">prl</name>
</gene>
<evidence type="ECO:0000250" key="1"/>
<evidence type="ECO:0000255" key="2"/>
<evidence type="ECO:0000305" key="3"/>
<sequence>MAHRETNGSKLFITVLCMVAACSAVPINDLLDRASQRSDMLHSLSTTLTKDLSNHVPPVGWTMMPRPPLCHTSSLQTPNDKEQALQLSESDLMSLARSLLQAWQDPLVDLSNSANSLLHPSQSSISNKIRELQEHSKSLGDGLDILSGKMGPAAQAISSLPYRGSNDIGEDNISKLTNFHFLLSCFRRDSHKIDSFLKVLRCRAAKVQPEMC</sequence>
<feature type="signal peptide" evidence="2">
    <location>
        <begin position="1"/>
        <end position="24"/>
    </location>
</feature>
<feature type="chain" id="PRO_0000032948" description="Prolactin">
    <location>
        <begin position="25"/>
        <end position="212"/>
    </location>
</feature>
<feature type="disulfide bond" evidence="1">
    <location>
        <begin position="70"/>
        <end position="185"/>
    </location>
</feature>
<feature type="disulfide bond" evidence="1">
    <location>
        <begin position="202"/>
        <end position="212"/>
    </location>
</feature>
<protein>
    <recommendedName>
        <fullName>Prolactin</fullName>
        <shortName>PRL</shortName>
    </recommendedName>
</protein>
<organism>
    <name type="scientific">Sparus aurata</name>
    <name type="common">Gilthead sea bream</name>
    <dbReference type="NCBI Taxonomy" id="8175"/>
    <lineage>
        <taxon>Eukaryota</taxon>
        <taxon>Metazoa</taxon>
        <taxon>Chordata</taxon>
        <taxon>Craniata</taxon>
        <taxon>Vertebrata</taxon>
        <taxon>Euteleostomi</taxon>
        <taxon>Actinopterygii</taxon>
        <taxon>Neopterygii</taxon>
        <taxon>Teleostei</taxon>
        <taxon>Neoteleostei</taxon>
        <taxon>Acanthomorphata</taxon>
        <taxon>Eupercaria</taxon>
        <taxon>Spariformes</taxon>
        <taxon>Sparidae</taxon>
        <taxon>Sparus</taxon>
    </lineage>
</organism>
<name>PRL_SPAAU</name>
<dbReference type="EMBL" id="AF060541">
    <property type="protein sequence ID" value="AAC26852.1"/>
    <property type="molecule type" value="mRNA"/>
</dbReference>
<dbReference type="SMR" id="O93337"/>
<dbReference type="InParanoid" id="O93337"/>
<dbReference type="Proteomes" id="UP000472265">
    <property type="component" value="Unplaced"/>
</dbReference>
<dbReference type="GO" id="GO:0005615">
    <property type="term" value="C:extracellular space"/>
    <property type="evidence" value="ECO:0007669"/>
    <property type="project" value="TreeGrafter"/>
</dbReference>
<dbReference type="GO" id="GO:0005179">
    <property type="term" value="F:hormone activity"/>
    <property type="evidence" value="ECO:0007669"/>
    <property type="project" value="UniProtKB-KW"/>
</dbReference>
<dbReference type="GO" id="GO:0008284">
    <property type="term" value="P:positive regulation of cell population proliferation"/>
    <property type="evidence" value="ECO:0007669"/>
    <property type="project" value="TreeGrafter"/>
</dbReference>
<dbReference type="GO" id="GO:0046427">
    <property type="term" value="P:positive regulation of receptor signaling pathway via JAK-STAT"/>
    <property type="evidence" value="ECO:0007669"/>
    <property type="project" value="TreeGrafter"/>
</dbReference>
<dbReference type="GO" id="GO:0031667">
    <property type="term" value="P:response to nutrient levels"/>
    <property type="evidence" value="ECO:0007669"/>
    <property type="project" value="TreeGrafter"/>
</dbReference>
<dbReference type="Gene3D" id="1.20.1250.10">
    <property type="match status" value="1"/>
</dbReference>
<dbReference type="InterPro" id="IPR009079">
    <property type="entry name" value="4_helix_cytokine-like_core"/>
</dbReference>
<dbReference type="InterPro" id="IPR001400">
    <property type="entry name" value="Somatotropin/Prolactin"/>
</dbReference>
<dbReference type="InterPro" id="IPR018116">
    <property type="entry name" value="Somatotropin_CS"/>
</dbReference>
<dbReference type="PANTHER" id="PTHR11417:SF5">
    <property type="entry name" value="PROLACTIN"/>
    <property type="match status" value="1"/>
</dbReference>
<dbReference type="PANTHER" id="PTHR11417">
    <property type="entry name" value="SOMATOTROPIN,PROLACTIN"/>
    <property type="match status" value="1"/>
</dbReference>
<dbReference type="Pfam" id="PF00103">
    <property type="entry name" value="Hormone_1"/>
    <property type="match status" value="1"/>
</dbReference>
<dbReference type="PRINTS" id="PR00836">
    <property type="entry name" value="SOMATOTROPIN"/>
</dbReference>
<dbReference type="SUPFAM" id="SSF47266">
    <property type="entry name" value="4-helical cytokines"/>
    <property type="match status" value="1"/>
</dbReference>
<dbReference type="PROSITE" id="PS00266">
    <property type="entry name" value="SOMATOTROPIN_1"/>
    <property type="match status" value="1"/>
</dbReference>
<dbReference type="PROSITE" id="PS00338">
    <property type="entry name" value="SOMATOTROPIN_2"/>
    <property type="match status" value="1"/>
</dbReference>
<accession>O93337</accession>
<proteinExistence type="evidence at transcript level"/>